<reference key="1">
    <citation type="journal article" date="2009" name="Genome Biol.">
        <title>A whole-genome assembly of the domestic cow, Bos taurus.</title>
        <authorList>
            <person name="Zimin A.V."/>
            <person name="Delcher A.L."/>
            <person name="Florea L."/>
            <person name="Kelley D.R."/>
            <person name="Schatz M.C."/>
            <person name="Puiu D."/>
            <person name="Hanrahan F."/>
            <person name="Pertea G."/>
            <person name="Van Tassell C.P."/>
            <person name="Sonstegard T.S."/>
            <person name="Marcais G."/>
            <person name="Roberts M."/>
            <person name="Subramanian P."/>
            <person name="Yorke J.A."/>
            <person name="Salzberg S.L."/>
        </authorList>
    </citation>
    <scope>NUCLEOTIDE SEQUENCE [LARGE SCALE GENOMIC DNA]</scope>
    <source>
        <strain>Hereford</strain>
    </source>
</reference>
<reference key="2">
    <citation type="submission" date="2007-07" db="EMBL/GenBank/DDBJ databases">
        <authorList>
            <consortium name="NIH - Mammalian Gene Collection (MGC) project"/>
        </authorList>
    </citation>
    <scope>NUCLEOTIDE SEQUENCE [LARGE SCALE MRNA]</scope>
    <source>
        <strain>Hereford</strain>
        <tissue>Uterus</tissue>
    </source>
</reference>
<gene>
    <name type="primary">FAM32A</name>
    <name type="synonym">OTAG12</name>
</gene>
<proteinExistence type="inferred from homology"/>
<accession>A6QR31</accession>
<feature type="chain" id="PRO_0000417670" description="Protein FAM32A">
    <location>
        <begin position="1"/>
        <end position="112"/>
    </location>
</feature>
<feature type="region of interest" description="Disordered" evidence="2">
    <location>
        <begin position="23"/>
        <end position="58"/>
    </location>
</feature>
<feature type="compositionally biased region" description="Basic and acidic residues" evidence="2">
    <location>
        <begin position="45"/>
        <end position="58"/>
    </location>
</feature>
<sequence>MEAYEQVQKGPLKLKGVAELGVTKRKKKKKDKDKAKLLEAMGTSKKNEEEKRRGLDKRTPAQAAFEKMQEKRQMERILKKASKTHKQRVEDFNRHLDTLTEHYDIPKVSWTK</sequence>
<organism>
    <name type="scientific">Bos taurus</name>
    <name type="common">Bovine</name>
    <dbReference type="NCBI Taxonomy" id="9913"/>
    <lineage>
        <taxon>Eukaryota</taxon>
        <taxon>Metazoa</taxon>
        <taxon>Chordata</taxon>
        <taxon>Craniata</taxon>
        <taxon>Vertebrata</taxon>
        <taxon>Euteleostomi</taxon>
        <taxon>Mammalia</taxon>
        <taxon>Eutheria</taxon>
        <taxon>Laurasiatheria</taxon>
        <taxon>Artiodactyla</taxon>
        <taxon>Ruminantia</taxon>
        <taxon>Pecora</taxon>
        <taxon>Bovidae</taxon>
        <taxon>Bovinae</taxon>
        <taxon>Bos</taxon>
    </lineage>
</organism>
<comment type="function">
    <text evidence="1">May induce G2 arrest and apoptosis. May also increase cell sensitivity to apoptotic stimuli.</text>
</comment>
<comment type="subcellular location">
    <subcellularLocation>
        <location evidence="1">Nucleus</location>
    </subcellularLocation>
</comment>
<comment type="similarity">
    <text evidence="3">Belongs to the FAM32 family.</text>
</comment>
<protein>
    <recommendedName>
        <fullName>Protein FAM32A</fullName>
    </recommendedName>
    <alternativeName>
        <fullName>Ovarian tumor associated gene 12</fullName>
        <shortName>OTAG-12</shortName>
    </alternativeName>
</protein>
<evidence type="ECO:0000250" key="1"/>
<evidence type="ECO:0000256" key="2">
    <source>
        <dbReference type="SAM" id="MobiDB-lite"/>
    </source>
</evidence>
<evidence type="ECO:0000305" key="3"/>
<dbReference type="EMBL" id="DAAA02019107">
    <property type="status" value="NOT_ANNOTATED_CDS"/>
    <property type="molecule type" value="Genomic_DNA"/>
</dbReference>
<dbReference type="EMBL" id="DAAA02019108">
    <property type="status" value="NOT_ANNOTATED_CDS"/>
    <property type="molecule type" value="Genomic_DNA"/>
</dbReference>
<dbReference type="EMBL" id="BC150092">
    <property type="protein sequence ID" value="AAI50093.1"/>
    <property type="molecule type" value="mRNA"/>
</dbReference>
<dbReference type="RefSeq" id="NP_001098474.1">
    <property type="nucleotide sequence ID" value="NM_001105004.1"/>
</dbReference>
<dbReference type="SMR" id="A6QR31"/>
<dbReference type="FunCoup" id="A6QR31">
    <property type="interactions" value="2284"/>
</dbReference>
<dbReference type="STRING" id="9913.ENSBTAP00000056336"/>
<dbReference type="PaxDb" id="9913-ENSBTAP00000056336"/>
<dbReference type="Ensembl" id="ENSBTAT00000064219.2">
    <property type="protein sequence ID" value="ENSBTAP00000056336.1"/>
    <property type="gene ID" value="ENSBTAG00000046846.3"/>
</dbReference>
<dbReference type="GeneID" id="508634"/>
<dbReference type="KEGG" id="bta:508634"/>
<dbReference type="CTD" id="26017"/>
<dbReference type="VEuPathDB" id="HostDB:ENSBTAG00000046846"/>
<dbReference type="eggNOG" id="KOG3410">
    <property type="taxonomic scope" value="Eukaryota"/>
</dbReference>
<dbReference type="GeneTree" id="ENSGT00390000013811"/>
<dbReference type="HOGENOM" id="CLU_098435_3_0_1"/>
<dbReference type="InParanoid" id="A6QR31"/>
<dbReference type="OMA" id="QLSEHHD"/>
<dbReference type="OrthoDB" id="205403at2759"/>
<dbReference type="TreeFam" id="TF314020"/>
<dbReference type="Reactome" id="R-BTA-72163">
    <property type="pathway name" value="mRNA Splicing - Major Pathway"/>
</dbReference>
<dbReference type="Proteomes" id="UP000009136">
    <property type="component" value="Chromosome 7"/>
</dbReference>
<dbReference type="Bgee" id="ENSBTAG00000046846">
    <property type="expression patterns" value="Expressed in diaphragm and 106 other cell types or tissues"/>
</dbReference>
<dbReference type="GO" id="GO:0005730">
    <property type="term" value="C:nucleolus"/>
    <property type="evidence" value="ECO:0000318"/>
    <property type="project" value="GO_Central"/>
</dbReference>
<dbReference type="GO" id="GO:0006915">
    <property type="term" value="P:apoptotic process"/>
    <property type="evidence" value="ECO:0007669"/>
    <property type="project" value="UniProtKB-KW"/>
</dbReference>
<dbReference type="InterPro" id="IPR013865">
    <property type="entry name" value="FAM32A"/>
</dbReference>
<dbReference type="PANTHER" id="PTHR13282">
    <property type="entry name" value="PROTEIN FAM32A"/>
    <property type="match status" value="1"/>
</dbReference>
<dbReference type="PANTHER" id="PTHR13282:SF6">
    <property type="entry name" value="PROTEIN FAM32A"/>
    <property type="match status" value="1"/>
</dbReference>
<dbReference type="Pfam" id="PF08555">
    <property type="entry name" value="FAM32A"/>
    <property type="match status" value="1"/>
</dbReference>
<name>FA32A_BOVIN</name>
<keyword id="KW-0053">Apoptosis</keyword>
<keyword id="KW-0131">Cell cycle</keyword>
<keyword id="KW-0539">Nucleus</keyword>
<keyword id="KW-1185">Reference proteome</keyword>